<keyword id="KW-0997">Cell inner membrane</keyword>
<keyword id="KW-1003">Cell membrane</keyword>
<keyword id="KW-0472">Membrane</keyword>
<keyword id="KW-0812">Transmembrane</keyword>
<keyword id="KW-1133">Transmembrane helix</keyword>
<organism>
    <name type="scientific">Salmonella paratyphi A (strain ATCC 9150 / SARB42)</name>
    <dbReference type="NCBI Taxonomy" id="295319"/>
    <lineage>
        <taxon>Bacteria</taxon>
        <taxon>Pseudomonadati</taxon>
        <taxon>Pseudomonadota</taxon>
        <taxon>Gammaproteobacteria</taxon>
        <taxon>Enterobacterales</taxon>
        <taxon>Enterobacteriaceae</taxon>
        <taxon>Salmonella</taxon>
    </lineage>
</organism>
<comment type="subcellular location">
    <subcellularLocation>
        <location evidence="1">Cell inner membrane</location>
        <topology evidence="1">Multi-pass membrane protein</topology>
    </subcellularLocation>
</comment>
<comment type="similarity">
    <text evidence="3">Belongs to the UPF0056 (MarC) family.</text>
</comment>
<sequence>MMDLFKAIGLGLVVLLPLANPLTTVALFLGLAGNMNSAERNRQSYMASVYVFAIMMVAYYAGQLVMNTFGISIPGLRIAGGVIVAFIGFRMLFPQQKAHESPEAKSKSEELADEPTANIAFVPLAMPSTAGPGTIAMIISSASTVRHGGEFPDWVIMVAPPIIFLAVAVILWGCLRSSGAIMRLVGKGGIEAISRLMGFLLVCMGVQFIINGVLEIIKTYH</sequence>
<evidence type="ECO:0000250" key="1"/>
<evidence type="ECO:0000255" key="2"/>
<evidence type="ECO:0000305" key="3"/>
<accession>Q5PN94</accession>
<reference key="1">
    <citation type="journal article" date="2004" name="Nat. Genet.">
        <title>Comparison of genome degradation in Paratyphi A and Typhi, human-restricted serovars of Salmonella enterica that cause typhoid.</title>
        <authorList>
            <person name="McClelland M."/>
            <person name="Sanderson K.E."/>
            <person name="Clifton S.W."/>
            <person name="Latreille P."/>
            <person name="Porwollik S."/>
            <person name="Sabo A."/>
            <person name="Meyer R."/>
            <person name="Bieri T."/>
            <person name="Ozersky P."/>
            <person name="McLellan M."/>
            <person name="Harkins C.R."/>
            <person name="Wang C."/>
            <person name="Nguyen C."/>
            <person name="Berghoff A."/>
            <person name="Elliott G."/>
            <person name="Kohlberg S."/>
            <person name="Strong C."/>
            <person name="Du F."/>
            <person name="Carter J."/>
            <person name="Kremizki C."/>
            <person name="Layman D."/>
            <person name="Leonard S."/>
            <person name="Sun H."/>
            <person name="Fulton L."/>
            <person name="Nash W."/>
            <person name="Miner T."/>
            <person name="Minx P."/>
            <person name="Delehaunty K."/>
            <person name="Fronick C."/>
            <person name="Magrini V."/>
            <person name="Nhan M."/>
            <person name="Warren W."/>
            <person name="Florea L."/>
            <person name="Spieth J."/>
            <person name="Wilson R.K."/>
        </authorList>
    </citation>
    <scope>NUCLEOTIDE SEQUENCE [LARGE SCALE GENOMIC DNA]</scope>
    <source>
        <strain>ATCC 9150 / SARB42</strain>
    </source>
</reference>
<protein>
    <recommendedName>
        <fullName>UPF0056 inner membrane protein MarC</fullName>
    </recommendedName>
</protein>
<name>MARC_SALPA</name>
<proteinExistence type="inferred from homology"/>
<dbReference type="EMBL" id="CP000026">
    <property type="protein sequence ID" value="AAV77279.1"/>
    <property type="molecule type" value="Genomic_DNA"/>
</dbReference>
<dbReference type="RefSeq" id="WP_000968972.1">
    <property type="nucleotide sequence ID" value="NC_006511.1"/>
</dbReference>
<dbReference type="SMR" id="Q5PN94"/>
<dbReference type="KEGG" id="spt:SPA1334"/>
<dbReference type="HOGENOM" id="CLU_079909_2_0_6"/>
<dbReference type="Proteomes" id="UP000008185">
    <property type="component" value="Chromosome"/>
</dbReference>
<dbReference type="GO" id="GO:0005886">
    <property type="term" value="C:plasma membrane"/>
    <property type="evidence" value="ECO:0007669"/>
    <property type="project" value="UniProtKB-SubCell"/>
</dbReference>
<dbReference type="InterPro" id="IPR002771">
    <property type="entry name" value="Multi_antbiot-R_MarC"/>
</dbReference>
<dbReference type="NCBIfam" id="TIGR00427">
    <property type="entry name" value="NAAT family transporter"/>
    <property type="match status" value="1"/>
</dbReference>
<dbReference type="NCBIfam" id="NF008228">
    <property type="entry name" value="PRK10995.1"/>
    <property type="match status" value="1"/>
</dbReference>
<dbReference type="PANTHER" id="PTHR33508:SF2">
    <property type="entry name" value="UPF0056 INNER MEMBRANE PROTEIN MARC"/>
    <property type="match status" value="1"/>
</dbReference>
<dbReference type="PANTHER" id="PTHR33508">
    <property type="entry name" value="UPF0056 MEMBRANE PROTEIN YHCE"/>
    <property type="match status" value="1"/>
</dbReference>
<dbReference type="Pfam" id="PF01914">
    <property type="entry name" value="MarC"/>
    <property type="match status" value="1"/>
</dbReference>
<feature type="chain" id="PRO_0000343824" description="UPF0056 inner membrane protein MarC">
    <location>
        <begin position="1"/>
        <end position="221"/>
    </location>
</feature>
<feature type="topological domain" description="Periplasmic" evidence="2">
    <location>
        <begin position="1"/>
        <end position="7"/>
    </location>
</feature>
<feature type="transmembrane region" description="Helical" evidence="2">
    <location>
        <begin position="8"/>
        <end position="28"/>
    </location>
</feature>
<feature type="topological domain" description="Cytoplasmic" evidence="2">
    <location>
        <begin position="29"/>
        <end position="45"/>
    </location>
</feature>
<feature type="transmembrane region" description="Helical" evidence="2">
    <location>
        <begin position="46"/>
        <end position="66"/>
    </location>
</feature>
<feature type="topological domain" description="Periplasmic" evidence="2">
    <location>
        <begin position="67"/>
        <end position="68"/>
    </location>
</feature>
<feature type="transmembrane region" description="Helical" evidence="2">
    <location>
        <begin position="69"/>
        <end position="89"/>
    </location>
</feature>
<feature type="topological domain" description="Cytoplasmic" evidence="2">
    <location>
        <begin position="90"/>
        <end position="118"/>
    </location>
</feature>
<feature type="transmembrane region" description="Helical" evidence="2">
    <location>
        <begin position="119"/>
        <end position="139"/>
    </location>
</feature>
<feature type="topological domain" description="Periplasmic" evidence="2">
    <location>
        <begin position="140"/>
        <end position="154"/>
    </location>
</feature>
<feature type="transmembrane region" description="Helical" evidence="2">
    <location>
        <begin position="155"/>
        <end position="175"/>
    </location>
</feature>
<feature type="topological domain" description="Cytoplasmic" evidence="2">
    <location>
        <begin position="176"/>
        <end position="196"/>
    </location>
</feature>
<feature type="transmembrane region" description="Helical" evidence="2">
    <location>
        <begin position="197"/>
        <end position="217"/>
    </location>
</feature>
<feature type="topological domain" description="Periplasmic" evidence="2">
    <location>
        <begin position="218"/>
        <end position="221"/>
    </location>
</feature>
<gene>
    <name type="primary">marC</name>
    <name type="ordered locus">SPA1334</name>
</gene>